<proteinExistence type="inferred from homology"/>
<sequence>MLYHFLYPLSGQFGLFNVLRYPSFRIVAAGLVSLLIGLLLGPLFIERMRVLQYGHSNVREDTPERHKKKAGTPSMGGALILLAVTVSTLLFADLGNRLVWAALLVTLGYGVIGFWDDWLKISKRNSKGLAGKKKLVLQVLVVLAVYYGLLTDWQPRTTDGFPFLTIGSLVDLHLTLPFVPTHLFSPSLGWLYLPFMIFVVVATSNAVNLTDGLDGLAIGPTIVSSMTFLALSYVAGATIAGFSLAEYLRIAYIPGAEELGVFCSAIFGAGIAFLWYNTYPASVFMGDVGSLALGGGLGMLAVLTKNEVASAILHGVFLAETVSVILQVWSFRTTGKRIFRMAPIHHHYELKGWAEPKIIVRFWIMSIMLALVALMSLKLR</sequence>
<comment type="function">
    <text evidence="1">Catalyzes the initial step of the lipid cycle reactions in the biosynthesis of the cell wall peptidoglycan: transfers peptidoglycan precursor phospho-MurNAc-pentapeptide from UDP-MurNAc-pentapeptide onto the lipid carrier undecaprenyl phosphate, yielding undecaprenyl-pyrophosphoryl-MurNAc-pentapeptide, known as lipid I.</text>
</comment>
<comment type="catalytic activity">
    <reaction evidence="1">
        <text>UDP-N-acetyl-alpha-D-muramoyl-L-alanyl-gamma-D-glutamyl-meso-2,6-diaminopimeloyl-D-alanyl-D-alanine + di-trans,octa-cis-undecaprenyl phosphate = di-trans,octa-cis-undecaprenyl diphospho-N-acetyl-alpha-D-muramoyl-L-alanyl-D-glutamyl-meso-2,6-diaminopimeloyl-D-alanyl-D-alanine + UMP</text>
        <dbReference type="Rhea" id="RHEA:28386"/>
        <dbReference type="ChEBI" id="CHEBI:57865"/>
        <dbReference type="ChEBI" id="CHEBI:60392"/>
        <dbReference type="ChEBI" id="CHEBI:61386"/>
        <dbReference type="ChEBI" id="CHEBI:61387"/>
        <dbReference type="EC" id="2.7.8.13"/>
    </reaction>
</comment>
<comment type="cofactor">
    <cofactor evidence="1">
        <name>Mg(2+)</name>
        <dbReference type="ChEBI" id="CHEBI:18420"/>
    </cofactor>
</comment>
<comment type="pathway">
    <text evidence="1">Cell wall biogenesis; peptidoglycan biosynthesis.</text>
</comment>
<comment type="subcellular location">
    <subcellularLocation>
        <location evidence="1">Cell inner membrane</location>
        <topology evidence="1">Multi-pass membrane protein</topology>
    </subcellularLocation>
</comment>
<comment type="similarity">
    <text evidence="1">Belongs to the glycosyltransferase 4 family. MraY subfamily.</text>
</comment>
<reference key="1">
    <citation type="journal article" date="2015" name="Genome Announc.">
        <title>Complete genome sequence of Anaeromyxobacter sp. Fw109-5, an anaerobic, metal-reducing bacterium isolated from a contaminated subsurface environment.</title>
        <authorList>
            <person name="Hwang C."/>
            <person name="Copeland A."/>
            <person name="Lucas S."/>
            <person name="Lapidus A."/>
            <person name="Barry K."/>
            <person name="Glavina Del Rio T."/>
            <person name="Dalin E."/>
            <person name="Tice H."/>
            <person name="Pitluck S."/>
            <person name="Sims D."/>
            <person name="Brettin T."/>
            <person name="Bruce D.C."/>
            <person name="Detter J.C."/>
            <person name="Han C.S."/>
            <person name="Schmutz J."/>
            <person name="Larimer F.W."/>
            <person name="Land M.L."/>
            <person name="Hauser L.J."/>
            <person name="Kyrpides N."/>
            <person name="Lykidis A."/>
            <person name="Richardson P."/>
            <person name="Belieav A."/>
            <person name="Sanford R.A."/>
            <person name="Loeffler F.E."/>
            <person name="Fields M.W."/>
        </authorList>
    </citation>
    <scope>NUCLEOTIDE SEQUENCE [LARGE SCALE GENOMIC DNA]</scope>
    <source>
        <strain>Fw109-5</strain>
    </source>
</reference>
<name>MRAY_ANADF</name>
<evidence type="ECO:0000255" key="1">
    <source>
        <dbReference type="HAMAP-Rule" id="MF_00038"/>
    </source>
</evidence>
<organism>
    <name type="scientific">Anaeromyxobacter sp. (strain Fw109-5)</name>
    <dbReference type="NCBI Taxonomy" id="404589"/>
    <lineage>
        <taxon>Bacteria</taxon>
        <taxon>Pseudomonadati</taxon>
        <taxon>Myxococcota</taxon>
        <taxon>Myxococcia</taxon>
        <taxon>Myxococcales</taxon>
        <taxon>Cystobacterineae</taxon>
        <taxon>Anaeromyxobacteraceae</taxon>
        <taxon>Anaeromyxobacter</taxon>
    </lineage>
</organism>
<accession>A7HH64</accession>
<keyword id="KW-0131">Cell cycle</keyword>
<keyword id="KW-0132">Cell division</keyword>
<keyword id="KW-0997">Cell inner membrane</keyword>
<keyword id="KW-1003">Cell membrane</keyword>
<keyword id="KW-0133">Cell shape</keyword>
<keyword id="KW-0961">Cell wall biogenesis/degradation</keyword>
<keyword id="KW-0460">Magnesium</keyword>
<keyword id="KW-0472">Membrane</keyword>
<keyword id="KW-0479">Metal-binding</keyword>
<keyword id="KW-0573">Peptidoglycan synthesis</keyword>
<keyword id="KW-1185">Reference proteome</keyword>
<keyword id="KW-0808">Transferase</keyword>
<keyword id="KW-0812">Transmembrane</keyword>
<keyword id="KW-1133">Transmembrane helix</keyword>
<gene>
    <name evidence="1" type="primary">mraY</name>
    <name type="ordered locus">Anae109_3881</name>
</gene>
<protein>
    <recommendedName>
        <fullName evidence="1">Phospho-N-acetylmuramoyl-pentapeptide-transferase</fullName>
        <ecNumber evidence="1">2.7.8.13</ecNumber>
    </recommendedName>
    <alternativeName>
        <fullName evidence="1">UDP-MurNAc-pentapeptide phosphotransferase</fullName>
    </alternativeName>
</protein>
<feature type="chain" id="PRO_1000002933" description="Phospho-N-acetylmuramoyl-pentapeptide-transferase">
    <location>
        <begin position="1"/>
        <end position="380"/>
    </location>
</feature>
<feature type="transmembrane region" description="Helical" evidence="1">
    <location>
        <begin position="26"/>
        <end position="46"/>
    </location>
</feature>
<feature type="transmembrane region" description="Helical" evidence="1">
    <location>
        <begin position="75"/>
        <end position="95"/>
    </location>
</feature>
<feature type="transmembrane region" description="Helical" evidence="1">
    <location>
        <begin position="98"/>
        <end position="118"/>
    </location>
</feature>
<feature type="transmembrane region" description="Helical" evidence="1">
    <location>
        <begin position="135"/>
        <end position="155"/>
    </location>
</feature>
<feature type="transmembrane region" description="Helical" evidence="1">
    <location>
        <begin position="160"/>
        <end position="180"/>
    </location>
</feature>
<feature type="transmembrane region" description="Helical" evidence="1">
    <location>
        <begin position="183"/>
        <end position="203"/>
    </location>
</feature>
<feature type="transmembrane region" description="Helical" evidence="1">
    <location>
        <begin position="222"/>
        <end position="242"/>
    </location>
</feature>
<feature type="transmembrane region" description="Helical" evidence="1">
    <location>
        <begin position="259"/>
        <end position="279"/>
    </location>
</feature>
<feature type="transmembrane region" description="Helical" evidence="1">
    <location>
        <begin position="283"/>
        <end position="303"/>
    </location>
</feature>
<feature type="transmembrane region" description="Helical" evidence="1">
    <location>
        <begin position="311"/>
        <end position="331"/>
    </location>
</feature>
<feature type="transmembrane region" description="Helical" evidence="1">
    <location>
        <begin position="357"/>
        <end position="377"/>
    </location>
</feature>
<dbReference type="EC" id="2.7.8.13" evidence="1"/>
<dbReference type="EMBL" id="CP000769">
    <property type="protein sequence ID" value="ABS28060.1"/>
    <property type="molecule type" value="Genomic_DNA"/>
</dbReference>
<dbReference type="RefSeq" id="WP_012098694.1">
    <property type="nucleotide sequence ID" value="NC_009675.1"/>
</dbReference>
<dbReference type="SMR" id="A7HH64"/>
<dbReference type="STRING" id="404589.Anae109_3881"/>
<dbReference type="KEGG" id="afw:Anae109_3881"/>
<dbReference type="eggNOG" id="COG0472">
    <property type="taxonomic scope" value="Bacteria"/>
</dbReference>
<dbReference type="HOGENOM" id="CLU_023982_0_0_7"/>
<dbReference type="OrthoDB" id="9805475at2"/>
<dbReference type="UniPathway" id="UPA00219"/>
<dbReference type="Proteomes" id="UP000006382">
    <property type="component" value="Chromosome"/>
</dbReference>
<dbReference type="GO" id="GO:0005886">
    <property type="term" value="C:plasma membrane"/>
    <property type="evidence" value="ECO:0007669"/>
    <property type="project" value="UniProtKB-SubCell"/>
</dbReference>
<dbReference type="GO" id="GO:0046872">
    <property type="term" value="F:metal ion binding"/>
    <property type="evidence" value="ECO:0007669"/>
    <property type="project" value="UniProtKB-KW"/>
</dbReference>
<dbReference type="GO" id="GO:0008963">
    <property type="term" value="F:phospho-N-acetylmuramoyl-pentapeptide-transferase activity"/>
    <property type="evidence" value="ECO:0007669"/>
    <property type="project" value="UniProtKB-UniRule"/>
</dbReference>
<dbReference type="GO" id="GO:0051992">
    <property type="term" value="F:UDP-N-acetylmuramoyl-L-alanyl-D-glutamyl-meso-2,6-diaminopimelyl-D-alanyl-D-alanine:undecaprenyl-phosphate transferase activity"/>
    <property type="evidence" value="ECO:0007669"/>
    <property type="project" value="RHEA"/>
</dbReference>
<dbReference type="GO" id="GO:0051301">
    <property type="term" value="P:cell division"/>
    <property type="evidence" value="ECO:0007669"/>
    <property type="project" value="UniProtKB-KW"/>
</dbReference>
<dbReference type="GO" id="GO:0071555">
    <property type="term" value="P:cell wall organization"/>
    <property type="evidence" value="ECO:0007669"/>
    <property type="project" value="UniProtKB-KW"/>
</dbReference>
<dbReference type="GO" id="GO:0009252">
    <property type="term" value="P:peptidoglycan biosynthetic process"/>
    <property type="evidence" value="ECO:0007669"/>
    <property type="project" value="UniProtKB-UniRule"/>
</dbReference>
<dbReference type="GO" id="GO:0008360">
    <property type="term" value="P:regulation of cell shape"/>
    <property type="evidence" value="ECO:0007669"/>
    <property type="project" value="UniProtKB-KW"/>
</dbReference>
<dbReference type="CDD" id="cd06852">
    <property type="entry name" value="GT_MraY"/>
    <property type="match status" value="1"/>
</dbReference>
<dbReference type="HAMAP" id="MF_00038">
    <property type="entry name" value="MraY"/>
    <property type="match status" value="1"/>
</dbReference>
<dbReference type="InterPro" id="IPR000715">
    <property type="entry name" value="Glycosyl_transferase_4"/>
</dbReference>
<dbReference type="InterPro" id="IPR003524">
    <property type="entry name" value="PNAcMuramoyl-5peptid_Trfase"/>
</dbReference>
<dbReference type="InterPro" id="IPR018480">
    <property type="entry name" value="PNAcMuramoyl-5peptid_Trfase_CS"/>
</dbReference>
<dbReference type="NCBIfam" id="TIGR00445">
    <property type="entry name" value="mraY"/>
    <property type="match status" value="1"/>
</dbReference>
<dbReference type="PANTHER" id="PTHR22926">
    <property type="entry name" value="PHOSPHO-N-ACETYLMURAMOYL-PENTAPEPTIDE-TRANSFERASE"/>
    <property type="match status" value="1"/>
</dbReference>
<dbReference type="PANTHER" id="PTHR22926:SF5">
    <property type="entry name" value="PHOSPHO-N-ACETYLMURAMOYL-PENTAPEPTIDE-TRANSFERASE HOMOLOG"/>
    <property type="match status" value="1"/>
</dbReference>
<dbReference type="Pfam" id="PF00953">
    <property type="entry name" value="Glycos_transf_4"/>
    <property type="match status" value="1"/>
</dbReference>
<dbReference type="PROSITE" id="PS01347">
    <property type="entry name" value="MRAY_1"/>
    <property type="match status" value="1"/>
</dbReference>
<dbReference type="PROSITE" id="PS01348">
    <property type="entry name" value="MRAY_2"/>
    <property type="match status" value="1"/>
</dbReference>